<feature type="signal peptide" evidence="2">
    <location>
        <begin position="1"/>
        <end position="17"/>
    </location>
</feature>
<feature type="chain" id="PRO_0000017046" description="Beta-lactamase PSE-1">
    <location>
        <begin position="18"/>
        <end position="288"/>
    </location>
</feature>
<feature type="active site" description="Acyl-ester intermediate" evidence="3">
    <location>
        <position position="65"/>
    </location>
</feature>
<feature type="binding site" evidence="1">
    <location>
        <begin position="229"/>
        <end position="231"/>
    </location>
    <ligand>
        <name>substrate</name>
    </ligand>
</feature>
<feature type="disulfide bond" evidence="1">
    <location>
        <begin position="72"/>
        <end position="118"/>
    </location>
</feature>
<name>BLP1_PSEAI</name>
<keyword id="KW-0046">Antibiotic resistance</keyword>
<keyword id="KW-1015">Disulfide bond</keyword>
<keyword id="KW-0378">Hydrolase</keyword>
<keyword id="KW-0614">Plasmid</keyword>
<keyword id="KW-0732">Signal</keyword>
<accession>Q03170</accession>
<proteinExistence type="evidence at protein level"/>
<evidence type="ECO:0000250" key="1"/>
<evidence type="ECO:0000255" key="2"/>
<evidence type="ECO:0000255" key="3">
    <source>
        <dbReference type="PROSITE-ProRule" id="PRU10101"/>
    </source>
</evidence>
<evidence type="ECO:0000269" key="4">
    <source>
    </source>
</evidence>
<evidence type="ECO:0000303" key="5">
    <source>
    </source>
</evidence>
<evidence type="ECO:0000305" key="6"/>
<evidence type="ECO:0000305" key="7">
    <source>
    </source>
</evidence>
<gene>
    <name evidence="5" type="primary">pse1</name>
    <name type="synonym">carB2</name>
</gene>
<reference key="1">
    <citation type="journal article" date="1991" name="Antimicrob. Agents Chemother.">
        <title>Sequence of the PSE-1 beta-lactamase gene.</title>
        <authorList>
            <person name="Huovinen P."/>
            <person name="Jacoby G.A."/>
        </authorList>
    </citation>
    <scope>NUCLEOTIDE SEQUENCE [GENOMIC DNA]</scope>
    <source>
        <plasmid>RPL11</plasmid>
        <transposon>Tn1403</transposon>
    </source>
</reference>
<reference key="2">
    <citation type="journal article" date="1977" name="J. Bacteriol.">
        <title>Properties of the beta-lactamase specified by the Pseudomonas plasmid RPL11.</title>
        <authorList>
            <person name="Matthew M."/>
            <person name="Sykes R.B."/>
        </authorList>
    </citation>
    <scope>FUNCTION</scope>
    <scope>SUBSTRATE SPECIFICITY</scope>
    <scope>ACTIVITY REGULATION</scope>
    <scope>SUBUNIT</scope>
    <scope>INDUCTION</scope>
    <source>
        <plasmid>RPL11</plasmid>
    </source>
</reference>
<reference key="3">
    <citation type="journal article" date="1991" name="Biochem. J.">
        <title>A standard numbering scheme for the class A beta-lactamases.</title>
        <authorList>
            <person name="Ambler R.P."/>
            <person name="Coulson A.F."/>
            <person name="Frere J.M."/>
            <person name="Ghuysen J.M."/>
            <person name="Joris B."/>
            <person name="Forsman M."/>
            <person name="Levesque R.C."/>
            <person name="Tiraby G."/>
            <person name="Waley S.G."/>
        </authorList>
    </citation>
    <scope>AMINO ACID NUMBERING SCHEME</scope>
</reference>
<geneLocation type="plasmid">
    <name>RPL11</name>
</geneLocation>
<sequence length="288" mass="31348">MKFLLAFSLLIPSVVFASSSKFQQVEQDVKAIEVSLSARIGVSVLDTQNGEYWDYNGNQRFPLTSTFKTIACAKLLYDAEQGKVNPNSTVEIKKADLVTYSPVIEKQVGQAITLDDACFATMTTSDNTAANIILSAVGGPKGVTDFLRQIGDKETRLDRIEPDLNEGKLGDLRDTTTPKAIASTLNKFLFGSALSEMNQKKLESWMVNNQVTGNLLRSVLPAGWNIADRSGAGGFGARSITAVVWSEHQAPIIVSIYLAQTQASMAERNDAIVKIGHSIFDVYTSQSR</sequence>
<comment type="function">
    <text evidence="4">Hydrolyzes penicillin, ampicillin and carbenicillin but not other antibiotics including oxacillin, methicillin and cloxacillin.</text>
</comment>
<comment type="catalytic activity">
    <reaction evidence="3">
        <text>a beta-lactam + H2O = a substituted beta-amino acid</text>
        <dbReference type="Rhea" id="RHEA:20401"/>
        <dbReference type="ChEBI" id="CHEBI:15377"/>
        <dbReference type="ChEBI" id="CHEBI:35627"/>
        <dbReference type="ChEBI" id="CHEBI:140347"/>
        <dbReference type="EC" id="3.5.2.6"/>
    </reaction>
</comment>
<comment type="activity regulation">
    <text evidence="4">Inhibited by p-chloromercuribenzoate but not by cloxacillin.</text>
</comment>
<comment type="subunit">
    <text evidence="4">Monomer.</text>
</comment>
<comment type="induction">
    <text evidence="4">Constitutive (at protein level).</text>
</comment>
<comment type="miscellaneous">
    <text evidence="7">The class A beta-lactamase family has a specific amino-acid numbering system, sometimes called Ambler or ABL numbering and often misspelt as Amber. A multiple sequence alignment was used to derive a consensus sequence and then the consensus was numbered taking into account insertions and deletions. This allows use of identical numbers, e.g. for active site residues, despite differences in protein length. UniProt always uses natural numbering of residues, hence there appear to be differences in numbering between this entry and some papers.</text>
</comment>
<comment type="similarity">
    <text evidence="6">Belongs to the class-A beta-lactamase family.</text>
</comment>
<comment type="sequence caution" evidence="6">
    <conflict type="erroneous initiation">
        <sequence resource="EMBL-CDS" id="AAA25740"/>
    </conflict>
    <text>Extended N-terminus.</text>
</comment>
<protein>
    <recommendedName>
        <fullName>Beta-lactamase PSE-1</fullName>
        <ecNumber>3.5.2.6</ecNumber>
    </recommendedName>
    <alternativeName>
        <fullName>Beta-lactamase CARB-2</fullName>
    </alternativeName>
    <alternativeName>
        <fullName>Carbenicillinase 2</fullName>
    </alternativeName>
</protein>
<organism>
    <name type="scientific">Pseudomonas aeruginosa</name>
    <dbReference type="NCBI Taxonomy" id="287"/>
    <lineage>
        <taxon>Bacteria</taxon>
        <taxon>Pseudomonadati</taxon>
        <taxon>Pseudomonadota</taxon>
        <taxon>Gammaproteobacteria</taxon>
        <taxon>Pseudomonadales</taxon>
        <taxon>Pseudomonadaceae</taxon>
        <taxon>Pseudomonas</taxon>
    </lineage>
</organism>
<dbReference type="EC" id="3.5.2.6"/>
<dbReference type="EMBL" id="Z18955">
    <property type="protein sequence ID" value="CAA79480.1"/>
    <property type="molecule type" value="Genomic_DNA"/>
</dbReference>
<dbReference type="EMBL" id="M69058">
    <property type="protein sequence ID" value="AAA25741.1"/>
    <property type="molecule type" value="Genomic_DNA"/>
</dbReference>
<dbReference type="EMBL" id="M69058">
    <property type="protein sequence ID" value="AAA25740.1"/>
    <property type="status" value="ALT_INIT"/>
    <property type="molecule type" value="Genomic_DNA"/>
</dbReference>
<dbReference type="BMRB" id="Q03170"/>
<dbReference type="SMR" id="Q03170"/>
<dbReference type="CARD" id="ARO:3002241">
    <property type="molecule name" value="CARB-2"/>
    <property type="mechanism identifier" value="ARO:0001004"/>
    <property type="mechanism name" value="antibiotic inactivation"/>
</dbReference>
<dbReference type="KEGG" id="ag:AAA25741"/>
<dbReference type="GO" id="GO:0008800">
    <property type="term" value="F:beta-lactamase activity"/>
    <property type="evidence" value="ECO:0007669"/>
    <property type="project" value="UniProtKB-EC"/>
</dbReference>
<dbReference type="GO" id="GO:0030655">
    <property type="term" value="P:beta-lactam antibiotic catabolic process"/>
    <property type="evidence" value="ECO:0007669"/>
    <property type="project" value="InterPro"/>
</dbReference>
<dbReference type="GO" id="GO:0046677">
    <property type="term" value="P:response to antibiotic"/>
    <property type="evidence" value="ECO:0007669"/>
    <property type="project" value="UniProtKB-KW"/>
</dbReference>
<dbReference type="Gene3D" id="3.40.710.10">
    <property type="entry name" value="DD-peptidase/beta-lactamase superfamily"/>
    <property type="match status" value="1"/>
</dbReference>
<dbReference type="InterPro" id="IPR012338">
    <property type="entry name" value="Beta-lactam/transpept-like"/>
</dbReference>
<dbReference type="InterPro" id="IPR045155">
    <property type="entry name" value="Beta-lactam_cat"/>
</dbReference>
<dbReference type="InterPro" id="IPR000871">
    <property type="entry name" value="Beta-lactam_class-A"/>
</dbReference>
<dbReference type="InterPro" id="IPR023650">
    <property type="entry name" value="Beta-lactam_class-A_AS"/>
</dbReference>
<dbReference type="NCBIfam" id="NF033103">
    <property type="entry name" value="bla_class_A"/>
    <property type="match status" value="1"/>
</dbReference>
<dbReference type="NCBIfam" id="NF000481">
    <property type="entry name" value="carbeni_gen"/>
    <property type="match status" value="1"/>
</dbReference>
<dbReference type="NCBIfam" id="NF000480">
    <property type="entry name" value="PSE"/>
    <property type="match status" value="1"/>
</dbReference>
<dbReference type="PANTHER" id="PTHR35333">
    <property type="entry name" value="BETA-LACTAMASE"/>
    <property type="match status" value="1"/>
</dbReference>
<dbReference type="PANTHER" id="PTHR35333:SF3">
    <property type="entry name" value="BETA-LACTAMASE-TYPE TRANSPEPTIDASE FOLD CONTAINING PROTEIN"/>
    <property type="match status" value="1"/>
</dbReference>
<dbReference type="Pfam" id="PF13354">
    <property type="entry name" value="Beta-lactamase2"/>
    <property type="match status" value="1"/>
</dbReference>
<dbReference type="PRINTS" id="PR00118">
    <property type="entry name" value="BLACTAMASEA"/>
</dbReference>
<dbReference type="SUPFAM" id="SSF56601">
    <property type="entry name" value="beta-lactamase/transpeptidase-like"/>
    <property type="match status" value="1"/>
</dbReference>
<dbReference type="PROSITE" id="PS00146">
    <property type="entry name" value="BETA_LACTAMASE_A"/>
    <property type="match status" value="1"/>
</dbReference>